<keyword id="KW-0131">Cell cycle</keyword>
<keyword id="KW-0132">Cell division</keyword>
<keyword id="KW-1003">Cell membrane</keyword>
<keyword id="KW-0133">Cell shape</keyword>
<keyword id="KW-0961">Cell wall biogenesis/degradation</keyword>
<keyword id="KW-0328">Glycosyltransferase</keyword>
<keyword id="KW-0472">Membrane</keyword>
<keyword id="KW-0573">Peptidoglycan synthesis</keyword>
<keyword id="KW-0808">Transferase</keyword>
<proteinExistence type="inferred from homology"/>
<accession>Q48SK9</accession>
<reference key="1">
    <citation type="journal article" date="2005" name="J. Infect. Dis.">
        <title>Genome sequence of a serotype M28 strain of group A Streptococcus: potential new insights into puerperal sepsis and bacterial disease specificity.</title>
        <authorList>
            <person name="Green N.M."/>
            <person name="Zhang S."/>
            <person name="Porcella S.F."/>
            <person name="Nagiec M.J."/>
            <person name="Barbian K.D."/>
            <person name="Beres S.B."/>
            <person name="Lefebvre R.B."/>
            <person name="Musser J.M."/>
        </authorList>
    </citation>
    <scope>NUCLEOTIDE SEQUENCE [LARGE SCALE GENOMIC DNA]</scope>
    <source>
        <strain>MGAS6180</strain>
    </source>
</reference>
<gene>
    <name evidence="1" type="primary">murG</name>
    <name type="ordered locus">M28_Spy1191</name>
</gene>
<evidence type="ECO:0000255" key="1">
    <source>
        <dbReference type="HAMAP-Rule" id="MF_00033"/>
    </source>
</evidence>
<evidence type="ECO:0000305" key="2"/>
<dbReference type="EC" id="2.4.1.227" evidence="1"/>
<dbReference type="EMBL" id="CP000056">
    <property type="protein sequence ID" value="AAX72301.1"/>
    <property type="status" value="ALT_INIT"/>
    <property type="molecule type" value="Genomic_DNA"/>
</dbReference>
<dbReference type="RefSeq" id="WP_014407695.1">
    <property type="nucleotide sequence ID" value="NC_007296.2"/>
</dbReference>
<dbReference type="SMR" id="Q48SK9"/>
<dbReference type="CAZy" id="GT28">
    <property type="family name" value="Glycosyltransferase Family 28"/>
</dbReference>
<dbReference type="KEGG" id="spb:M28_Spy1191"/>
<dbReference type="HOGENOM" id="CLU_037404_0_0_9"/>
<dbReference type="UniPathway" id="UPA00219"/>
<dbReference type="GO" id="GO:0005886">
    <property type="term" value="C:plasma membrane"/>
    <property type="evidence" value="ECO:0007669"/>
    <property type="project" value="UniProtKB-SubCell"/>
</dbReference>
<dbReference type="GO" id="GO:0050511">
    <property type="term" value="F:undecaprenyldiphospho-muramoylpentapeptide beta-N-acetylglucosaminyltransferase activity"/>
    <property type="evidence" value="ECO:0007669"/>
    <property type="project" value="UniProtKB-UniRule"/>
</dbReference>
<dbReference type="GO" id="GO:0005975">
    <property type="term" value="P:carbohydrate metabolic process"/>
    <property type="evidence" value="ECO:0007669"/>
    <property type="project" value="InterPro"/>
</dbReference>
<dbReference type="GO" id="GO:0051301">
    <property type="term" value="P:cell division"/>
    <property type="evidence" value="ECO:0007669"/>
    <property type="project" value="UniProtKB-KW"/>
</dbReference>
<dbReference type="GO" id="GO:0071555">
    <property type="term" value="P:cell wall organization"/>
    <property type="evidence" value="ECO:0007669"/>
    <property type="project" value="UniProtKB-KW"/>
</dbReference>
<dbReference type="GO" id="GO:0030259">
    <property type="term" value="P:lipid glycosylation"/>
    <property type="evidence" value="ECO:0007669"/>
    <property type="project" value="UniProtKB-UniRule"/>
</dbReference>
<dbReference type="GO" id="GO:0009252">
    <property type="term" value="P:peptidoglycan biosynthetic process"/>
    <property type="evidence" value="ECO:0007669"/>
    <property type="project" value="UniProtKB-UniRule"/>
</dbReference>
<dbReference type="GO" id="GO:0008360">
    <property type="term" value="P:regulation of cell shape"/>
    <property type="evidence" value="ECO:0007669"/>
    <property type="project" value="UniProtKB-KW"/>
</dbReference>
<dbReference type="CDD" id="cd03785">
    <property type="entry name" value="GT28_MurG"/>
    <property type="match status" value="1"/>
</dbReference>
<dbReference type="Gene3D" id="3.40.50.2000">
    <property type="entry name" value="Glycogen Phosphorylase B"/>
    <property type="match status" value="2"/>
</dbReference>
<dbReference type="HAMAP" id="MF_00033">
    <property type="entry name" value="MurG"/>
    <property type="match status" value="1"/>
</dbReference>
<dbReference type="InterPro" id="IPR006009">
    <property type="entry name" value="GlcNAc_MurG"/>
</dbReference>
<dbReference type="InterPro" id="IPR007235">
    <property type="entry name" value="Glyco_trans_28_C"/>
</dbReference>
<dbReference type="InterPro" id="IPR004276">
    <property type="entry name" value="GlycoTrans_28_N"/>
</dbReference>
<dbReference type="PANTHER" id="PTHR21015:SF27">
    <property type="entry name" value="UDP-N-ACETYLGLUCOSAMINE--N-ACETYLMURAMYL-(PENTAPEPTIDE) PYROPHOSPHORYL-UNDECAPRENOL N-ACETYLGLUCOSAMINE TRANSFERASE"/>
    <property type="match status" value="1"/>
</dbReference>
<dbReference type="PANTHER" id="PTHR21015">
    <property type="entry name" value="UDP-N-ACETYLGLUCOSAMINE--N-ACETYLMURAMYL-(PENTAPEPTIDE) PYROPHOSPHORYL-UNDECAPRENOL N-ACETYLGLUCOSAMINE TRANSFERASE 1"/>
    <property type="match status" value="1"/>
</dbReference>
<dbReference type="Pfam" id="PF04101">
    <property type="entry name" value="Glyco_tran_28_C"/>
    <property type="match status" value="1"/>
</dbReference>
<dbReference type="Pfam" id="PF03033">
    <property type="entry name" value="Glyco_transf_28"/>
    <property type="match status" value="1"/>
</dbReference>
<dbReference type="SUPFAM" id="SSF53756">
    <property type="entry name" value="UDP-Glycosyltransferase/glycogen phosphorylase"/>
    <property type="match status" value="1"/>
</dbReference>
<sequence>MPKKILFTGGGTVGHVTLNLILIPKFIKDGWEVHYIGDKNGIEHTEIEKSGLDVTFHAIATGKLRRYFSWQNLADVFKVALGLLQSLFIVAKLRPQALFSKGGFVSVPPVVAAKLLGKPVFIHESDRSMGLANKIAYKFATTMYTTFEQEDQLSKVKHLGAVTKVFKDANQMPESTQLEAVKEYFSRDLKTLLFIGGSAGAHVFNQFISDHPELKQRYNIINITGDPHLNELSSHLYRVDYVTDLYQPLMAMADLVVTRGGSNTLFELLAMAKLHLIVPLGKEASRGDQLENATYFEKRGYAKQLQEPDLTLHNFDQAMADLFEHQADYEATMLATKEIQSPDFFYDLLRADISSAIKEK</sequence>
<protein>
    <recommendedName>
        <fullName evidence="1">UDP-N-acetylglucosamine--N-acetylmuramyl-(pentapeptide) pyrophosphoryl-undecaprenol N-acetylglucosamine transferase</fullName>
        <ecNumber evidence="1">2.4.1.227</ecNumber>
    </recommendedName>
    <alternativeName>
        <fullName evidence="1">Undecaprenyl-PP-MurNAc-pentapeptide-UDPGlcNAc GlcNAc transferase</fullName>
    </alternativeName>
</protein>
<comment type="function">
    <text evidence="1">Cell wall formation. Catalyzes the transfer of a GlcNAc subunit on undecaprenyl-pyrophosphoryl-MurNAc-pentapeptide (lipid intermediate I) to form undecaprenyl-pyrophosphoryl-MurNAc-(pentapeptide)GlcNAc (lipid intermediate II).</text>
</comment>
<comment type="catalytic activity">
    <reaction evidence="1">
        <text>Mur2Ac(oyl-L-Ala-gamma-D-Glu-L-Lys-D-Ala-D-Ala)-di-trans,octa-cis-undecaprenyl diphosphate + UDP-N-acetyl-alpha-D-glucosamine = beta-D-GlcNAc-(1-&gt;4)-Mur2Ac(oyl-L-Ala-gamma-D-Glu-L-Lys-D-Ala-D-Ala)-di-trans,octa-cis-undecaprenyl diphosphate + UDP + H(+)</text>
        <dbReference type="Rhea" id="RHEA:23192"/>
        <dbReference type="ChEBI" id="CHEBI:15378"/>
        <dbReference type="ChEBI" id="CHEBI:57705"/>
        <dbReference type="ChEBI" id="CHEBI:58223"/>
        <dbReference type="ChEBI" id="CHEBI:60032"/>
        <dbReference type="ChEBI" id="CHEBI:60033"/>
        <dbReference type="EC" id="2.4.1.227"/>
    </reaction>
</comment>
<comment type="pathway">
    <text evidence="1">Cell wall biogenesis; peptidoglycan biosynthesis.</text>
</comment>
<comment type="subcellular location">
    <subcellularLocation>
        <location evidence="1">Cell membrane</location>
        <topology evidence="1">Peripheral membrane protein</topology>
        <orientation evidence="1">Cytoplasmic side</orientation>
    </subcellularLocation>
</comment>
<comment type="similarity">
    <text evidence="1">Belongs to the glycosyltransferase 28 family. MurG subfamily.</text>
</comment>
<comment type="sequence caution" evidence="2">
    <conflict type="erroneous initiation">
        <sequence resource="EMBL-CDS" id="AAX72301"/>
    </conflict>
</comment>
<name>MURG_STRPM</name>
<organism>
    <name type="scientific">Streptococcus pyogenes serotype M28 (strain MGAS6180)</name>
    <dbReference type="NCBI Taxonomy" id="319701"/>
    <lineage>
        <taxon>Bacteria</taxon>
        <taxon>Bacillati</taxon>
        <taxon>Bacillota</taxon>
        <taxon>Bacilli</taxon>
        <taxon>Lactobacillales</taxon>
        <taxon>Streptococcaceae</taxon>
        <taxon>Streptococcus</taxon>
    </lineage>
</organism>
<feature type="chain" id="PRO_0000225102" description="UDP-N-acetylglucosamine--N-acetylmuramyl-(pentapeptide) pyrophosphoryl-undecaprenol N-acetylglucosamine transferase">
    <location>
        <begin position="1"/>
        <end position="360"/>
    </location>
</feature>
<feature type="binding site" evidence="1">
    <location>
        <position position="198"/>
    </location>
    <ligand>
        <name>UDP-N-acetyl-alpha-D-glucosamine</name>
        <dbReference type="ChEBI" id="CHEBI:57705"/>
    </ligand>
</feature>
<feature type="binding site" evidence="1">
    <location>
        <position position="289"/>
    </location>
    <ligand>
        <name>UDP-N-acetyl-alpha-D-glucosamine</name>
        <dbReference type="ChEBI" id="CHEBI:57705"/>
    </ligand>
</feature>